<evidence type="ECO:0000250" key="1"/>
<evidence type="ECO:0000255" key="2"/>
<evidence type="ECO:0000255" key="3">
    <source>
        <dbReference type="PROSITE-ProRule" id="PRU00040"/>
    </source>
</evidence>
<evidence type="ECO:0000305" key="4"/>
<sequence length="158" mass="18270">MGRFIFATLGLLLVAFSINGAKGCCCPHDWLTLKGFCYKVFNEHKTWNDAEMFCRKYKPGCHLASIHSGEESTDLAEYVSDYLKSGGNVWIGLNDPQKKRSWQWTDRSQNNFYPWKQGEPNNRANNENCVELWSPLGYKNWNDESCASTRAYLCKCRF</sequence>
<keyword id="KW-0106">Calcium</keyword>
<keyword id="KW-1015">Disulfide bond</keyword>
<keyword id="KW-0430">Lectin</keyword>
<keyword id="KW-0479">Metal-binding</keyword>
<keyword id="KW-0964">Secreted</keyword>
<keyword id="KW-0732">Signal</keyword>
<organism>
    <name type="scientific">Thrasops jacksonii</name>
    <name type="common">Jackson's black tree snake</name>
    <dbReference type="NCBI Taxonomy" id="186611"/>
    <lineage>
        <taxon>Eukaryota</taxon>
        <taxon>Metazoa</taxon>
        <taxon>Chordata</taxon>
        <taxon>Craniata</taxon>
        <taxon>Vertebrata</taxon>
        <taxon>Euteleostomi</taxon>
        <taxon>Lepidosauria</taxon>
        <taxon>Squamata</taxon>
        <taxon>Bifurcata</taxon>
        <taxon>Unidentata</taxon>
        <taxon>Episquamata</taxon>
        <taxon>Toxicofera</taxon>
        <taxon>Serpentes</taxon>
        <taxon>Colubroidea</taxon>
        <taxon>Colubridae</taxon>
        <taxon>Colubrinae</taxon>
        <taxon>Thrasops</taxon>
    </lineage>
</organism>
<accession>A7X3Z0</accession>
<protein>
    <recommendedName>
        <fullName>C-type lectin lectoxin-Thr1</fullName>
        <shortName>CTL</shortName>
    </recommendedName>
</protein>
<proteinExistence type="evidence at transcript level"/>
<reference key="1">
    <citation type="journal article" date="2008" name="Mol. Cell. Proteomics">
        <title>Evolution of an arsenal: structural and functional diversification of the venom system in the advanced snakes (Caenophidia).</title>
        <authorList>
            <person name="Fry B.G."/>
            <person name="Scheib H."/>
            <person name="van der Weerd L."/>
            <person name="Young B."/>
            <person name="McNaughtan J."/>
            <person name="Ramjan S.F.R."/>
            <person name="Vidal N."/>
            <person name="Poelmann R.E."/>
            <person name="Norman J.A."/>
        </authorList>
    </citation>
    <scope>NUCLEOTIDE SEQUENCE [MRNA]</scope>
    <source>
        <tissue>Venom gland</tissue>
    </source>
</reference>
<name>LECM_THRJA</name>
<comment type="function">
    <text evidence="1">Mannose-binding lectin which recognizes specific carbohydrate structures and agglutinates a variety of animal cells by binding to cell-surface glycoproteins and glycolipids. May be a calcium-dependent lectin (By similarity).</text>
</comment>
<comment type="subcellular location">
    <subcellularLocation>
        <location evidence="1">Secreted</location>
    </subcellularLocation>
</comment>
<comment type="tissue specificity">
    <text>Expressed by the venom gland.</text>
</comment>
<comment type="similarity">
    <text evidence="4">Belongs to the true venom lectin family.</text>
</comment>
<dbReference type="EMBL" id="EU029696">
    <property type="protein sequence ID" value="ABU68496.1"/>
    <property type="molecule type" value="mRNA"/>
</dbReference>
<dbReference type="SMR" id="A7X3Z0"/>
<dbReference type="GO" id="GO:0005576">
    <property type="term" value="C:extracellular region"/>
    <property type="evidence" value="ECO:0007669"/>
    <property type="project" value="UniProtKB-SubCell"/>
</dbReference>
<dbReference type="GO" id="GO:0030246">
    <property type="term" value="F:carbohydrate binding"/>
    <property type="evidence" value="ECO:0007669"/>
    <property type="project" value="UniProtKB-KW"/>
</dbReference>
<dbReference type="GO" id="GO:0046872">
    <property type="term" value="F:metal ion binding"/>
    <property type="evidence" value="ECO:0007669"/>
    <property type="project" value="UniProtKB-KW"/>
</dbReference>
<dbReference type="CDD" id="cd03594">
    <property type="entry name" value="CLECT_REG-1_like"/>
    <property type="match status" value="1"/>
</dbReference>
<dbReference type="FunFam" id="3.10.100.10:FF:000015">
    <property type="entry name" value="C-type lectin Cal"/>
    <property type="match status" value="1"/>
</dbReference>
<dbReference type="Gene3D" id="3.10.100.10">
    <property type="entry name" value="Mannose-Binding Protein A, subunit A"/>
    <property type="match status" value="1"/>
</dbReference>
<dbReference type="InterPro" id="IPR001304">
    <property type="entry name" value="C-type_lectin-like"/>
</dbReference>
<dbReference type="InterPro" id="IPR016186">
    <property type="entry name" value="C-type_lectin-like/link_sf"/>
</dbReference>
<dbReference type="InterPro" id="IPR050111">
    <property type="entry name" value="C-type_lectin/snaclec_domain"/>
</dbReference>
<dbReference type="InterPro" id="IPR018378">
    <property type="entry name" value="C-type_lectin_CS"/>
</dbReference>
<dbReference type="InterPro" id="IPR016187">
    <property type="entry name" value="CTDL_fold"/>
</dbReference>
<dbReference type="PANTHER" id="PTHR22803">
    <property type="entry name" value="MANNOSE, PHOSPHOLIPASE, LECTIN RECEPTOR RELATED"/>
    <property type="match status" value="1"/>
</dbReference>
<dbReference type="Pfam" id="PF00059">
    <property type="entry name" value="Lectin_C"/>
    <property type="match status" value="1"/>
</dbReference>
<dbReference type="PRINTS" id="PR01504">
    <property type="entry name" value="PNCREATITSAP"/>
</dbReference>
<dbReference type="SMART" id="SM00034">
    <property type="entry name" value="CLECT"/>
    <property type="match status" value="1"/>
</dbReference>
<dbReference type="SUPFAM" id="SSF56436">
    <property type="entry name" value="C-type lectin-like"/>
    <property type="match status" value="1"/>
</dbReference>
<dbReference type="PROSITE" id="PS00615">
    <property type="entry name" value="C_TYPE_LECTIN_1"/>
    <property type="match status" value="1"/>
</dbReference>
<dbReference type="PROSITE" id="PS50041">
    <property type="entry name" value="C_TYPE_LECTIN_2"/>
    <property type="match status" value="1"/>
</dbReference>
<feature type="signal peptide" evidence="2">
    <location>
        <begin position="1"/>
        <end position="23"/>
    </location>
</feature>
<feature type="chain" id="PRO_0000355292" description="C-type lectin lectoxin-Thr1">
    <location>
        <begin position="24"/>
        <end position="158"/>
    </location>
</feature>
<feature type="domain" description="C-type lectin" evidence="3">
    <location>
        <begin position="33"/>
        <end position="155"/>
    </location>
</feature>
<feature type="short sequence motif" description="Mannose-binding">
    <location>
        <begin position="119"/>
        <end position="121"/>
    </location>
</feature>
<feature type="binding site" evidence="1">
    <location>
        <position position="127"/>
    </location>
    <ligand>
        <name>Ca(2+)</name>
        <dbReference type="ChEBI" id="CHEBI:29108"/>
    </ligand>
</feature>
<feature type="binding site" evidence="1">
    <location>
        <position position="142"/>
    </location>
    <ligand>
        <name>Ca(2+)</name>
        <dbReference type="ChEBI" id="CHEBI:29108"/>
    </ligand>
</feature>
<feature type="binding site" evidence="1">
    <location>
        <position position="143"/>
    </location>
    <ligand>
        <name>Ca(2+)</name>
        <dbReference type="ChEBI" id="CHEBI:29108"/>
    </ligand>
</feature>
<feature type="disulfide bond" evidence="3">
    <location>
        <begin position="26"/>
        <end position="37"/>
    </location>
</feature>
<feature type="disulfide bond" evidence="3">
    <location>
        <begin position="54"/>
        <end position="154"/>
    </location>
</feature>
<feature type="disulfide bond" evidence="3">
    <location>
        <begin position="129"/>
        <end position="146"/>
    </location>
</feature>